<organism>
    <name type="scientific">Burkholderia pseudomallei (strain 668)</name>
    <dbReference type="NCBI Taxonomy" id="320373"/>
    <lineage>
        <taxon>Bacteria</taxon>
        <taxon>Pseudomonadati</taxon>
        <taxon>Pseudomonadota</taxon>
        <taxon>Betaproteobacteria</taxon>
        <taxon>Burkholderiales</taxon>
        <taxon>Burkholderiaceae</taxon>
        <taxon>Burkholderia</taxon>
        <taxon>pseudomallei group</taxon>
    </lineage>
</organism>
<dbReference type="EC" id="2.8.4.3" evidence="1"/>
<dbReference type="EMBL" id="CP000570">
    <property type="protein sequence ID" value="ABN82489.1"/>
    <property type="molecule type" value="Genomic_DNA"/>
</dbReference>
<dbReference type="RefSeq" id="WP_004190165.1">
    <property type="nucleotide sequence ID" value="NC_009074.1"/>
</dbReference>
<dbReference type="SMR" id="A3N5Z1"/>
<dbReference type="GeneID" id="93059186"/>
<dbReference type="KEGG" id="bpd:BURPS668_0710"/>
<dbReference type="HOGENOM" id="CLU_018697_2_0_4"/>
<dbReference type="GO" id="GO:0005829">
    <property type="term" value="C:cytosol"/>
    <property type="evidence" value="ECO:0007669"/>
    <property type="project" value="TreeGrafter"/>
</dbReference>
<dbReference type="GO" id="GO:0051539">
    <property type="term" value="F:4 iron, 4 sulfur cluster binding"/>
    <property type="evidence" value="ECO:0007669"/>
    <property type="project" value="UniProtKB-UniRule"/>
</dbReference>
<dbReference type="GO" id="GO:0046872">
    <property type="term" value="F:metal ion binding"/>
    <property type="evidence" value="ECO:0007669"/>
    <property type="project" value="UniProtKB-KW"/>
</dbReference>
<dbReference type="GO" id="GO:0035597">
    <property type="term" value="F:N6-isopentenyladenosine methylthiotransferase activity"/>
    <property type="evidence" value="ECO:0007669"/>
    <property type="project" value="TreeGrafter"/>
</dbReference>
<dbReference type="CDD" id="cd01335">
    <property type="entry name" value="Radical_SAM"/>
    <property type="match status" value="1"/>
</dbReference>
<dbReference type="FunFam" id="3.40.50.12160:FF:000001">
    <property type="entry name" value="tRNA-2-methylthio-N(6)-dimethylallyladenosine synthase"/>
    <property type="match status" value="1"/>
</dbReference>
<dbReference type="FunFam" id="3.80.30.20:FF:000001">
    <property type="entry name" value="tRNA-2-methylthio-N(6)-dimethylallyladenosine synthase 2"/>
    <property type="match status" value="1"/>
</dbReference>
<dbReference type="Gene3D" id="3.40.50.12160">
    <property type="entry name" value="Methylthiotransferase, N-terminal domain"/>
    <property type="match status" value="1"/>
</dbReference>
<dbReference type="Gene3D" id="3.80.30.20">
    <property type="entry name" value="tm_1862 like domain"/>
    <property type="match status" value="1"/>
</dbReference>
<dbReference type="HAMAP" id="MF_01864">
    <property type="entry name" value="tRNA_metthiotr_MiaB"/>
    <property type="match status" value="1"/>
</dbReference>
<dbReference type="InterPro" id="IPR006638">
    <property type="entry name" value="Elp3/MiaA/NifB-like_rSAM"/>
</dbReference>
<dbReference type="InterPro" id="IPR005839">
    <property type="entry name" value="Methylthiotransferase"/>
</dbReference>
<dbReference type="InterPro" id="IPR020612">
    <property type="entry name" value="Methylthiotransferase_CS"/>
</dbReference>
<dbReference type="InterPro" id="IPR013848">
    <property type="entry name" value="Methylthiotransferase_N"/>
</dbReference>
<dbReference type="InterPro" id="IPR038135">
    <property type="entry name" value="Methylthiotransferase_N_sf"/>
</dbReference>
<dbReference type="InterPro" id="IPR006463">
    <property type="entry name" value="MiaB_methiolase"/>
</dbReference>
<dbReference type="InterPro" id="IPR007197">
    <property type="entry name" value="rSAM"/>
</dbReference>
<dbReference type="InterPro" id="IPR023404">
    <property type="entry name" value="rSAM_horseshoe"/>
</dbReference>
<dbReference type="InterPro" id="IPR002792">
    <property type="entry name" value="TRAM_dom"/>
</dbReference>
<dbReference type="NCBIfam" id="TIGR01574">
    <property type="entry name" value="miaB-methiolase"/>
    <property type="match status" value="1"/>
</dbReference>
<dbReference type="NCBIfam" id="TIGR00089">
    <property type="entry name" value="MiaB/RimO family radical SAM methylthiotransferase"/>
    <property type="match status" value="1"/>
</dbReference>
<dbReference type="PANTHER" id="PTHR43020">
    <property type="entry name" value="CDK5 REGULATORY SUBUNIT-ASSOCIATED PROTEIN 1"/>
    <property type="match status" value="1"/>
</dbReference>
<dbReference type="PANTHER" id="PTHR43020:SF2">
    <property type="entry name" value="MITOCHONDRIAL TRNA METHYLTHIOTRANSFERASE CDK5RAP1"/>
    <property type="match status" value="1"/>
</dbReference>
<dbReference type="Pfam" id="PF04055">
    <property type="entry name" value="Radical_SAM"/>
    <property type="match status" value="1"/>
</dbReference>
<dbReference type="Pfam" id="PF01938">
    <property type="entry name" value="TRAM"/>
    <property type="match status" value="1"/>
</dbReference>
<dbReference type="Pfam" id="PF00919">
    <property type="entry name" value="UPF0004"/>
    <property type="match status" value="1"/>
</dbReference>
<dbReference type="SFLD" id="SFLDF00273">
    <property type="entry name" value="(dimethylallyl)adenosine_tRNA"/>
    <property type="match status" value="1"/>
</dbReference>
<dbReference type="SFLD" id="SFLDG01082">
    <property type="entry name" value="B12-binding_domain_containing"/>
    <property type="match status" value="1"/>
</dbReference>
<dbReference type="SFLD" id="SFLDS00029">
    <property type="entry name" value="Radical_SAM"/>
    <property type="match status" value="1"/>
</dbReference>
<dbReference type="SMART" id="SM00729">
    <property type="entry name" value="Elp3"/>
    <property type="match status" value="1"/>
</dbReference>
<dbReference type="SUPFAM" id="SSF102114">
    <property type="entry name" value="Radical SAM enzymes"/>
    <property type="match status" value="1"/>
</dbReference>
<dbReference type="PROSITE" id="PS51449">
    <property type="entry name" value="MTTASE_N"/>
    <property type="match status" value="1"/>
</dbReference>
<dbReference type="PROSITE" id="PS01278">
    <property type="entry name" value="MTTASE_RADICAL"/>
    <property type="match status" value="1"/>
</dbReference>
<dbReference type="PROSITE" id="PS51918">
    <property type="entry name" value="RADICAL_SAM"/>
    <property type="match status" value="1"/>
</dbReference>
<dbReference type="PROSITE" id="PS50926">
    <property type="entry name" value="TRAM"/>
    <property type="match status" value="1"/>
</dbReference>
<accession>A3N5Z1</accession>
<keyword id="KW-0004">4Fe-4S</keyword>
<keyword id="KW-0963">Cytoplasm</keyword>
<keyword id="KW-0408">Iron</keyword>
<keyword id="KW-0411">Iron-sulfur</keyword>
<keyword id="KW-0479">Metal-binding</keyword>
<keyword id="KW-0949">S-adenosyl-L-methionine</keyword>
<keyword id="KW-0808">Transferase</keyword>
<keyword id="KW-0819">tRNA processing</keyword>
<proteinExistence type="inferred from homology"/>
<protein>
    <recommendedName>
        <fullName evidence="1">tRNA-2-methylthio-N(6)-dimethylallyladenosine synthase</fullName>
        <ecNumber evidence="1">2.8.4.3</ecNumber>
    </recommendedName>
    <alternativeName>
        <fullName evidence="1">(Dimethylallyl)adenosine tRNA methylthiotransferase MiaB</fullName>
    </alternativeName>
    <alternativeName>
        <fullName evidence="1">tRNA-i(6)A37 methylthiotransferase</fullName>
    </alternativeName>
</protein>
<gene>
    <name evidence="1" type="primary">miaB</name>
    <name type="ordered locus">BURPS668_0710</name>
</gene>
<evidence type="ECO:0000255" key="1">
    <source>
        <dbReference type="HAMAP-Rule" id="MF_01864"/>
    </source>
</evidence>
<evidence type="ECO:0000255" key="2">
    <source>
        <dbReference type="PROSITE-ProRule" id="PRU01266"/>
    </source>
</evidence>
<reference key="1">
    <citation type="journal article" date="2010" name="Genome Biol. Evol.">
        <title>Continuing evolution of Burkholderia mallei through genome reduction and large-scale rearrangements.</title>
        <authorList>
            <person name="Losada L."/>
            <person name="Ronning C.M."/>
            <person name="DeShazer D."/>
            <person name="Woods D."/>
            <person name="Fedorova N."/>
            <person name="Kim H.S."/>
            <person name="Shabalina S.A."/>
            <person name="Pearson T.R."/>
            <person name="Brinkac L."/>
            <person name="Tan P."/>
            <person name="Nandi T."/>
            <person name="Crabtree J."/>
            <person name="Badger J."/>
            <person name="Beckstrom-Sternberg S."/>
            <person name="Saqib M."/>
            <person name="Schutzer S.E."/>
            <person name="Keim P."/>
            <person name="Nierman W.C."/>
        </authorList>
    </citation>
    <scope>NUCLEOTIDE SEQUENCE [LARGE SCALE GENOMIC DNA]</scope>
    <source>
        <strain>668</strain>
    </source>
</reference>
<name>MIAB_BURP6</name>
<sequence>MTKKVYVKTFGCQMNEYDSDKMVDVLNAAEGLEKTDTPEDADIILFNTCSVREKAQEKVFSDLGRVRELKEAKPDLLIGVGGCVASQEGASIVARAPYVDLVFGPQTLHRLPQMIDARRESGRAQVDITFPEIEKFDHLPPARVEGPSAFVSIMEGCSKYCSYCVVPYTRGDEVSRPLDDVLTEVAGLADQGVREVTLLGQNVNAYRGAIAAGSAEIADFATLIEYVADIPGIERIRYTTSHPKEFTQRLLDVYAKVPKLVDHLHLPVQHGSDRILMAMKRGYTVLEYKSVIRKLRAIRPNLSLSTDIIVGFPGETDADFDKTMALVHEMSYDTSFSFIYSPRPGTPAANLADDTPRELKLKRLQHLQATIEENVARISQSMLGKVERILVEGPSRKDPNELAGRTENNRVVNFPAPSAAHPRLIGQMIDVKINHAYPHSLRGELVLAHGDASAATH</sequence>
<comment type="function">
    <text evidence="1">Catalyzes the methylthiolation of N6-(dimethylallyl)adenosine (i(6)A), leading to the formation of 2-methylthio-N6-(dimethylallyl)adenosine (ms(2)i(6)A) at position 37 in tRNAs that read codons beginning with uridine.</text>
</comment>
<comment type="catalytic activity">
    <reaction evidence="1">
        <text>N(6)-dimethylallyladenosine(37) in tRNA + (sulfur carrier)-SH + AH2 + 2 S-adenosyl-L-methionine = 2-methylsulfanyl-N(6)-dimethylallyladenosine(37) in tRNA + (sulfur carrier)-H + 5'-deoxyadenosine + L-methionine + A + S-adenosyl-L-homocysteine + 2 H(+)</text>
        <dbReference type="Rhea" id="RHEA:37067"/>
        <dbReference type="Rhea" id="RHEA-COMP:10375"/>
        <dbReference type="Rhea" id="RHEA-COMP:10376"/>
        <dbReference type="Rhea" id="RHEA-COMP:14737"/>
        <dbReference type="Rhea" id="RHEA-COMP:14739"/>
        <dbReference type="ChEBI" id="CHEBI:13193"/>
        <dbReference type="ChEBI" id="CHEBI:15378"/>
        <dbReference type="ChEBI" id="CHEBI:17319"/>
        <dbReference type="ChEBI" id="CHEBI:17499"/>
        <dbReference type="ChEBI" id="CHEBI:29917"/>
        <dbReference type="ChEBI" id="CHEBI:57844"/>
        <dbReference type="ChEBI" id="CHEBI:57856"/>
        <dbReference type="ChEBI" id="CHEBI:59789"/>
        <dbReference type="ChEBI" id="CHEBI:64428"/>
        <dbReference type="ChEBI" id="CHEBI:74415"/>
        <dbReference type="ChEBI" id="CHEBI:74417"/>
        <dbReference type="EC" id="2.8.4.3"/>
    </reaction>
</comment>
<comment type="cofactor">
    <cofactor evidence="1">
        <name>[4Fe-4S] cluster</name>
        <dbReference type="ChEBI" id="CHEBI:49883"/>
    </cofactor>
    <text evidence="1">Binds 2 [4Fe-4S] clusters. One cluster is coordinated with 3 cysteines and an exchangeable S-adenosyl-L-methionine.</text>
</comment>
<comment type="subunit">
    <text evidence="1">Monomer.</text>
</comment>
<comment type="subcellular location">
    <subcellularLocation>
        <location evidence="1">Cytoplasm</location>
    </subcellularLocation>
</comment>
<comment type="similarity">
    <text evidence="1">Belongs to the methylthiotransferase family. MiaB subfamily.</text>
</comment>
<feature type="chain" id="PRO_0000374188" description="tRNA-2-methylthio-N(6)-dimethylallyladenosine synthase">
    <location>
        <begin position="1"/>
        <end position="457"/>
    </location>
</feature>
<feature type="domain" description="MTTase N-terminal" evidence="1">
    <location>
        <begin position="3"/>
        <end position="120"/>
    </location>
</feature>
<feature type="domain" description="Radical SAM core" evidence="2">
    <location>
        <begin position="143"/>
        <end position="377"/>
    </location>
</feature>
<feature type="domain" description="TRAM" evidence="1">
    <location>
        <begin position="380"/>
        <end position="447"/>
    </location>
</feature>
<feature type="binding site" evidence="1">
    <location>
        <position position="12"/>
    </location>
    <ligand>
        <name>[4Fe-4S] cluster</name>
        <dbReference type="ChEBI" id="CHEBI:49883"/>
        <label>1</label>
    </ligand>
</feature>
<feature type="binding site" evidence="1">
    <location>
        <position position="49"/>
    </location>
    <ligand>
        <name>[4Fe-4S] cluster</name>
        <dbReference type="ChEBI" id="CHEBI:49883"/>
        <label>1</label>
    </ligand>
</feature>
<feature type="binding site" evidence="1">
    <location>
        <position position="83"/>
    </location>
    <ligand>
        <name>[4Fe-4S] cluster</name>
        <dbReference type="ChEBI" id="CHEBI:49883"/>
        <label>1</label>
    </ligand>
</feature>
<feature type="binding site" evidence="1">
    <location>
        <position position="157"/>
    </location>
    <ligand>
        <name>[4Fe-4S] cluster</name>
        <dbReference type="ChEBI" id="CHEBI:49883"/>
        <label>2</label>
        <note>4Fe-4S-S-AdoMet</note>
    </ligand>
</feature>
<feature type="binding site" evidence="1">
    <location>
        <position position="161"/>
    </location>
    <ligand>
        <name>[4Fe-4S] cluster</name>
        <dbReference type="ChEBI" id="CHEBI:49883"/>
        <label>2</label>
        <note>4Fe-4S-S-AdoMet</note>
    </ligand>
</feature>
<feature type="binding site" evidence="1">
    <location>
        <position position="164"/>
    </location>
    <ligand>
        <name>[4Fe-4S] cluster</name>
        <dbReference type="ChEBI" id="CHEBI:49883"/>
        <label>2</label>
        <note>4Fe-4S-S-AdoMet</note>
    </ligand>
</feature>